<evidence type="ECO:0000255" key="1">
    <source>
        <dbReference type="HAMAP-Rule" id="MF_01077"/>
    </source>
</evidence>
<comment type="function">
    <text evidence="1">Required for maturation of 30S ribosomal subunits.</text>
</comment>
<comment type="subcellular location">
    <subcellularLocation>
        <location evidence="1">Cytoplasm</location>
    </subcellularLocation>
</comment>
<comment type="similarity">
    <text evidence="1">Belongs to the RimP family.</text>
</comment>
<sequence length="174" mass="19504">MKLSNKTQALHDLIAPAVQACDVNLWGIEFIPQGKRSLLRIFIDKPVDETAEPVLNEDGETELGRGIGVQDCVRVTQQVGAILDVHDPISGEYALEVSSPGWDRPFFQLEQMSAYIGQQVALRLISAVENRRKFQAKLLLVDLENEMIQVEVDGKHVLEIDSHNIDKANLIYQD</sequence>
<gene>
    <name evidence="1" type="primary">rimP</name>
    <name type="ordered locus">ACIAD0367</name>
</gene>
<organism>
    <name type="scientific">Acinetobacter baylyi (strain ATCC 33305 / BD413 / ADP1)</name>
    <dbReference type="NCBI Taxonomy" id="62977"/>
    <lineage>
        <taxon>Bacteria</taxon>
        <taxon>Pseudomonadati</taxon>
        <taxon>Pseudomonadota</taxon>
        <taxon>Gammaproteobacteria</taxon>
        <taxon>Moraxellales</taxon>
        <taxon>Moraxellaceae</taxon>
        <taxon>Acinetobacter</taxon>
    </lineage>
</organism>
<proteinExistence type="inferred from homology"/>
<name>RIMP_ACIAD</name>
<keyword id="KW-0963">Cytoplasm</keyword>
<keyword id="KW-0690">Ribosome biogenesis</keyword>
<accession>Q6FF42</accession>
<reference key="1">
    <citation type="journal article" date="2004" name="Nucleic Acids Res.">
        <title>Unique features revealed by the genome sequence of Acinetobacter sp. ADP1, a versatile and naturally transformation competent bacterium.</title>
        <authorList>
            <person name="Barbe V."/>
            <person name="Vallenet D."/>
            <person name="Fonknechten N."/>
            <person name="Kreimeyer A."/>
            <person name="Oztas S."/>
            <person name="Labarre L."/>
            <person name="Cruveiller S."/>
            <person name="Robert C."/>
            <person name="Duprat S."/>
            <person name="Wincker P."/>
            <person name="Ornston L.N."/>
            <person name="Weissenbach J."/>
            <person name="Marliere P."/>
            <person name="Cohen G.N."/>
            <person name="Medigue C."/>
        </authorList>
    </citation>
    <scope>NUCLEOTIDE SEQUENCE [LARGE SCALE GENOMIC DNA]</scope>
    <source>
        <strain>ATCC 33305 / BD413 / ADP1</strain>
    </source>
</reference>
<feature type="chain" id="PRO_0000181836" description="Ribosome maturation factor RimP">
    <location>
        <begin position="1"/>
        <end position="174"/>
    </location>
</feature>
<protein>
    <recommendedName>
        <fullName evidence="1">Ribosome maturation factor RimP</fullName>
    </recommendedName>
</protein>
<dbReference type="EMBL" id="CR543861">
    <property type="protein sequence ID" value="CAG67315.1"/>
    <property type="molecule type" value="Genomic_DNA"/>
</dbReference>
<dbReference type="RefSeq" id="WP_004920465.1">
    <property type="nucleotide sequence ID" value="NC_005966.1"/>
</dbReference>
<dbReference type="SMR" id="Q6FF42"/>
<dbReference type="STRING" id="202950.GCA_001485005_00630"/>
<dbReference type="GeneID" id="45232871"/>
<dbReference type="KEGG" id="aci:ACIAD0367"/>
<dbReference type="eggNOG" id="COG0779">
    <property type="taxonomic scope" value="Bacteria"/>
</dbReference>
<dbReference type="HOGENOM" id="CLU_070525_1_1_6"/>
<dbReference type="OrthoDB" id="9805006at2"/>
<dbReference type="BioCyc" id="ASP62977:ACIAD_RS01715-MONOMER"/>
<dbReference type="Proteomes" id="UP000000430">
    <property type="component" value="Chromosome"/>
</dbReference>
<dbReference type="GO" id="GO:0005829">
    <property type="term" value="C:cytosol"/>
    <property type="evidence" value="ECO:0007669"/>
    <property type="project" value="TreeGrafter"/>
</dbReference>
<dbReference type="GO" id="GO:0000028">
    <property type="term" value="P:ribosomal small subunit assembly"/>
    <property type="evidence" value="ECO:0007669"/>
    <property type="project" value="TreeGrafter"/>
</dbReference>
<dbReference type="GO" id="GO:0006412">
    <property type="term" value="P:translation"/>
    <property type="evidence" value="ECO:0007669"/>
    <property type="project" value="TreeGrafter"/>
</dbReference>
<dbReference type="CDD" id="cd01734">
    <property type="entry name" value="YlxS_C"/>
    <property type="match status" value="1"/>
</dbReference>
<dbReference type="FunFam" id="3.30.300.70:FF:000001">
    <property type="entry name" value="Ribosome maturation factor RimP"/>
    <property type="match status" value="1"/>
</dbReference>
<dbReference type="Gene3D" id="2.30.30.180">
    <property type="entry name" value="Ribosome maturation factor RimP, C-terminal domain"/>
    <property type="match status" value="1"/>
</dbReference>
<dbReference type="Gene3D" id="3.30.300.70">
    <property type="entry name" value="RimP-like superfamily, N-terminal"/>
    <property type="match status" value="1"/>
</dbReference>
<dbReference type="HAMAP" id="MF_01077">
    <property type="entry name" value="RimP"/>
    <property type="match status" value="1"/>
</dbReference>
<dbReference type="InterPro" id="IPR003728">
    <property type="entry name" value="Ribosome_maturation_RimP"/>
</dbReference>
<dbReference type="InterPro" id="IPR028998">
    <property type="entry name" value="RimP_C"/>
</dbReference>
<dbReference type="InterPro" id="IPR036847">
    <property type="entry name" value="RimP_C_sf"/>
</dbReference>
<dbReference type="InterPro" id="IPR028989">
    <property type="entry name" value="RimP_N"/>
</dbReference>
<dbReference type="InterPro" id="IPR035956">
    <property type="entry name" value="RimP_N_sf"/>
</dbReference>
<dbReference type="NCBIfam" id="NF011224">
    <property type="entry name" value="PRK14631.1"/>
    <property type="match status" value="1"/>
</dbReference>
<dbReference type="PANTHER" id="PTHR33867">
    <property type="entry name" value="RIBOSOME MATURATION FACTOR RIMP"/>
    <property type="match status" value="1"/>
</dbReference>
<dbReference type="PANTHER" id="PTHR33867:SF1">
    <property type="entry name" value="RIBOSOME MATURATION FACTOR RIMP"/>
    <property type="match status" value="1"/>
</dbReference>
<dbReference type="Pfam" id="PF17384">
    <property type="entry name" value="DUF150_C"/>
    <property type="match status" value="1"/>
</dbReference>
<dbReference type="Pfam" id="PF02576">
    <property type="entry name" value="RimP_N"/>
    <property type="match status" value="1"/>
</dbReference>
<dbReference type="SUPFAM" id="SSF74942">
    <property type="entry name" value="YhbC-like, C-terminal domain"/>
    <property type="match status" value="1"/>
</dbReference>
<dbReference type="SUPFAM" id="SSF75420">
    <property type="entry name" value="YhbC-like, N-terminal domain"/>
    <property type="match status" value="1"/>
</dbReference>